<comment type="function">
    <text>Inhibits pectin methylesterase; may be involved in the regulation of fruit ripening.</text>
</comment>
<comment type="subcellular location">
    <subcellularLocation>
        <location evidence="1">Cytoplasm</location>
    </subcellularLocation>
    <text>Concentrated in a layer close to the cell membrane.</text>
</comment>
<comment type="tissue specificity">
    <text evidence="2">Fruit.</text>
</comment>
<comment type="developmental stage">
    <text evidence="2">Expression increases as fruit matures.</text>
</comment>
<comment type="similarity">
    <text evidence="3">Belongs to the PMEI family.</text>
</comment>
<accession>P83326</accession>
<accession>Q852R5</accession>
<accession>Q852R6</accession>
<accession>Q852R7</accession>
<protein>
    <recommendedName>
        <fullName>Pectinesterase inhibitor</fullName>
    </recommendedName>
    <alternativeName>
        <fullName>AdPMEI</fullName>
        <shortName>PMEI</shortName>
    </alternativeName>
    <alternativeName>
        <fullName>Pectin methylesterase inhibitor</fullName>
    </alternativeName>
</protein>
<evidence type="ECO:0000269" key="1">
    <source>
    </source>
</evidence>
<evidence type="ECO:0000269" key="2">
    <source>
    </source>
</evidence>
<evidence type="ECO:0000305" key="3"/>
<evidence type="ECO:0007829" key="4">
    <source>
        <dbReference type="PDB" id="1XG2"/>
    </source>
</evidence>
<reference key="1">
    <citation type="journal article" date="2004" name="Plant Cell Rep.">
        <title>Pectin methylesterase inhibitor cDNA from kiwi fruit.</title>
        <authorList>
            <person name="Irifune K."/>
            <person name="Nishida T."/>
            <person name="Egawa H."/>
            <person name="Nagatani A."/>
        </authorList>
    </citation>
    <scope>NUCLEOTIDE SEQUENCE [MRNA]</scope>
    <scope>TISSUE SPECIFICITY</scope>
    <scope>DEVELOPMENTAL STAGE</scope>
    <source>
        <strain>cv. Hayward</strain>
        <tissue>Fruit</tissue>
    </source>
</reference>
<reference key="2">
    <citation type="journal article" date="2000" name="Eur. J. Biochem.">
        <title>Kiwi protein inhibitor of pectin methylesterase. Amino-acid sequence and structural importance of two disulfide bridges.</title>
        <authorList>
            <person name="Camardella L."/>
            <person name="Carratore V."/>
            <person name="Ciardiello M.A."/>
            <person name="Servillo L."/>
            <person name="Balestrieri C."/>
            <person name="Giovane A."/>
        </authorList>
    </citation>
    <scope>PROTEIN SEQUENCE OF 33-184</scope>
    <scope>SUBCELLULAR LOCATION</scope>
    <scope>DISULFIDE BONDS</scope>
    <scope>CIRCULAR DICHROISM ANALYSIS</scope>
    <source>
        <tissue>Fruit</tissue>
    </source>
</reference>
<reference key="3">
    <citation type="journal article" date="2005" name="Plant Cell">
        <title>Structural basis for the interaction between pectin methylesterase and a specific inhibitor protein.</title>
        <authorList>
            <person name="Di Matteo A."/>
            <person name="Giovane A."/>
            <person name="Raiola A."/>
            <person name="Camardella L."/>
            <person name="Bonivento D."/>
            <person name="De Lorenzo G."/>
            <person name="Cervone F."/>
            <person name="Bellincampi D."/>
            <person name="Tsernoglou D."/>
        </authorList>
    </citation>
    <scope>X-RAY CRYSTALLOGRAPHY (1.9 ANGSTROMS) OF 33-184 IN COMPLEX WITH TOMATO PME1</scope>
</reference>
<keyword id="KW-0002">3D-structure</keyword>
<keyword id="KW-0963">Cytoplasm</keyword>
<keyword id="KW-0903">Direct protein sequencing</keyword>
<keyword id="KW-1015">Disulfide bond</keyword>
<keyword id="KW-0732">Signal</keyword>
<organism>
    <name type="scientific">Actinidia deliciosa</name>
    <name type="common">Kiwi</name>
    <dbReference type="NCBI Taxonomy" id="3627"/>
    <lineage>
        <taxon>Eukaryota</taxon>
        <taxon>Viridiplantae</taxon>
        <taxon>Streptophyta</taxon>
        <taxon>Embryophyta</taxon>
        <taxon>Tracheophyta</taxon>
        <taxon>Spermatophyta</taxon>
        <taxon>Magnoliopsida</taxon>
        <taxon>eudicotyledons</taxon>
        <taxon>Gunneridae</taxon>
        <taxon>Pentapetalae</taxon>
        <taxon>asterids</taxon>
        <taxon>Ericales</taxon>
        <taxon>Actinidiaceae</taxon>
        <taxon>Actinidia</taxon>
    </lineage>
</organism>
<gene>
    <name type="primary">PMEI</name>
</gene>
<feature type="signal peptide" evidence="1">
    <location>
        <begin position="1"/>
        <end position="32"/>
    </location>
</feature>
<feature type="chain" id="PRO_0000217197" description="Pectinesterase inhibitor">
    <location>
        <begin position="33"/>
        <end position="184"/>
    </location>
</feature>
<feature type="propeptide" id="PRO_0000300246">
    <location>
        <position position="185"/>
    </location>
</feature>
<feature type="disulfide bond" evidence="1">
    <location>
        <begin position="41"/>
        <end position="50"/>
    </location>
</feature>
<feature type="disulfide bond" evidence="1">
    <location>
        <begin position="106"/>
        <end position="146"/>
    </location>
</feature>
<feature type="sequence conflict" description="In Ref. 1; BAC54966." evidence="3" ref="1">
    <original>E</original>
    <variation>K</variation>
    <location>
        <position position="55"/>
    </location>
</feature>
<feature type="sequence conflict" description="In Ref. 1; BAC54966." evidence="3" ref="1">
    <original>A</original>
    <variation>S</variation>
    <location>
        <position position="88"/>
    </location>
</feature>
<feature type="sequence conflict" description="In Ref. 1; BAC54965." evidence="3" ref="1">
    <original>Y</original>
    <variation>F</variation>
    <location>
        <position position="110"/>
    </location>
</feature>
<feature type="sequence conflict" description="In Ref. 1; BAC54965/BAC54966." evidence="3" ref="1">
    <original>V</original>
    <variation>I</variation>
    <location>
        <position position="174"/>
    </location>
</feature>
<feature type="helix" evidence="4">
    <location>
        <begin position="35"/>
        <end position="40"/>
    </location>
</feature>
<feature type="helix" evidence="4">
    <location>
        <begin position="41"/>
        <end position="43"/>
    </location>
</feature>
<feature type="helix" evidence="4">
    <location>
        <begin position="47"/>
        <end position="55"/>
    </location>
</feature>
<feature type="helix" evidence="4">
    <location>
        <begin position="60"/>
        <end position="62"/>
    </location>
</feature>
<feature type="helix" evidence="4">
    <location>
        <begin position="65"/>
        <end position="91"/>
    </location>
</feature>
<feature type="helix" evidence="4">
    <location>
        <begin position="97"/>
        <end position="126"/>
    </location>
</feature>
<feature type="helix" evidence="4">
    <location>
        <begin position="129"/>
        <end position="149"/>
    </location>
</feature>
<feature type="strand" evidence="4">
    <location>
        <begin position="152"/>
        <end position="154"/>
    </location>
</feature>
<feature type="helix" evidence="4">
    <location>
        <begin position="158"/>
        <end position="180"/>
    </location>
</feature>
<dbReference type="EMBL" id="AB091088">
    <property type="protein sequence ID" value="BAC54964.1"/>
    <property type="molecule type" value="mRNA"/>
</dbReference>
<dbReference type="EMBL" id="AB091089">
    <property type="protein sequence ID" value="BAC54965.1"/>
    <property type="molecule type" value="mRNA"/>
</dbReference>
<dbReference type="EMBL" id="AB091090">
    <property type="protein sequence ID" value="BAC54966.1"/>
    <property type="molecule type" value="mRNA"/>
</dbReference>
<dbReference type="PDB" id="1XG2">
    <property type="method" value="X-ray"/>
    <property type="resolution" value="1.90 A"/>
    <property type="chains" value="B=33-184"/>
</dbReference>
<dbReference type="PDBsum" id="1XG2"/>
<dbReference type="SMR" id="P83326"/>
<dbReference type="Allergome" id="3548">
    <property type="allergen name" value="Act d 6"/>
</dbReference>
<dbReference type="Allergome" id="3977">
    <property type="allergen name" value="Act d 6.0101"/>
</dbReference>
<dbReference type="EvolutionaryTrace" id="P83326"/>
<dbReference type="GO" id="GO:0005737">
    <property type="term" value="C:cytoplasm"/>
    <property type="evidence" value="ECO:0007669"/>
    <property type="project" value="UniProtKB-SubCell"/>
</dbReference>
<dbReference type="GO" id="GO:0046910">
    <property type="term" value="F:pectinesterase inhibitor activity"/>
    <property type="evidence" value="ECO:0007669"/>
    <property type="project" value="InterPro"/>
</dbReference>
<dbReference type="CDD" id="cd15797">
    <property type="entry name" value="PMEI"/>
    <property type="match status" value="1"/>
</dbReference>
<dbReference type="FunFam" id="1.20.140.40:FF:000008">
    <property type="entry name" value="Invertase/pectin methylesterase inhibitor family protein"/>
    <property type="match status" value="1"/>
</dbReference>
<dbReference type="Gene3D" id="1.20.140.40">
    <property type="entry name" value="Invertase/pectin methylesterase inhibitor family protein"/>
    <property type="match status" value="1"/>
</dbReference>
<dbReference type="InterPro" id="IPR035513">
    <property type="entry name" value="Invertase/methylesterase_inhib"/>
</dbReference>
<dbReference type="InterPro" id="IPR052421">
    <property type="entry name" value="PCW_Enzyme_Inhibitor"/>
</dbReference>
<dbReference type="InterPro" id="IPR006501">
    <property type="entry name" value="Pectinesterase_inhib_dom"/>
</dbReference>
<dbReference type="InterPro" id="IPR034086">
    <property type="entry name" value="PMEI_plant"/>
</dbReference>
<dbReference type="NCBIfam" id="TIGR01614">
    <property type="entry name" value="PME_inhib"/>
    <property type="match status" value="1"/>
</dbReference>
<dbReference type="PANTHER" id="PTHR36710">
    <property type="entry name" value="PECTINESTERASE INHIBITOR-LIKE"/>
    <property type="match status" value="1"/>
</dbReference>
<dbReference type="PANTHER" id="PTHR36710:SF4">
    <property type="entry name" value="PLANT INVERTASE_PECTIN METHYLESTERASE INHIBITOR SUPERFAMILY PROTEIN"/>
    <property type="match status" value="1"/>
</dbReference>
<dbReference type="Pfam" id="PF04043">
    <property type="entry name" value="PMEI"/>
    <property type="match status" value="1"/>
</dbReference>
<dbReference type="SMART" id="SM00856">
    <property type="entry name" value="PMEI"/>
    <property type="match status" value="1"/>
</dbReference>
<dbReference type="SUPFAM" id="SSF101148">
    <property type="entry name" value="Plant invertase/pectin methylesterase inhibitor"/>
    <property type="match status" value="1"/>
</dbReference>
<name>PMEI_ACTDE</name>
<proteinExistence type="evidence at protein level"/>
<sequence length="185" mass="19893">MAFSYCSSSLFVSLLLVILFISPLSQRPSVKAENHLISEICPKTRNPSLCLQALESDPRSASKDLKGLGQFSIDIAQASAKQTSKIIASLTNQATDPKLKGRYETCSENYADAIDSLGQAKQFLTSGDYNSLNIYASAAFDGAGTCEDSFEGPPNIPTQLHQADLKLEDLCDIVLVISNLLPGSK</sequence>